<sequence>MRYAFAAEATTCNAFWRNVDMTVTALYEVPLGVCTQDPDRWTTTPDDEAKTLCRACPRRWLCARDAVESAGAEGLWAGVVIPESGRARAFALGQLRSLAERNGYPVRDHRVSAQSA</sequence>
<evidence type="ECO:0000250" key="1"/>
<evidence type="ECO:0000269" key="2">
    <source>
    </source>
</evidence>
<evidence type="ECO:0000269" key="3">
    <source>
    </source>
</evidence>
<evidence type="ECO:0000305" key="4"/>
<comment type="function">
    <text evidence="1">Acts as a transcriptional regulator. Probably redox-responsive. The apo- but not holo-form probably binds DNA (By similarity).</text>
</comment>
<comment type="cofactor">
    <cofactor evidence="1">
        <name>[4Fe-4S] cluster</name>
        <dbReference type="ChEBI" id="CHEBI:49883"/>
    </cofactor>
    <text evidence="1">Binds 1 [4Fe-4S] cluster per subunit. Following nitrosylation of the [4Fe-4S] cluster binds 1 [4Fe-8(NO)] cluster per subunit.</text>
</comment>
<comment type="subcellular location">
    <subcellularLocation>
        <location evidence="1">Cytoplasm</location>
    </subcellularLocation>
</comment>
<comment type="induction">
    <text evidence="2 3">Weakly expressed in exponential phase, more induced upon entry into stationary phase. 3-fold induced by streptomycin and pH 4.5, 4-fold by ethanol. Slightly induced during entry into hypoxia, by cAMP, in macrophage infection and 5-fold induced by NO. Repressed by WhiB4.</text>
</comment>
<comment type="PTM">
    <text evidence="1">The Fe-S cluster can be nitrosylated by nitric oxide (NO).</text>
</comment>
<comment type="PTM">
    <text evidence="1">Upon Fe-S cluster removal intramolecular disulfide bonds are formed.</text>
</comment>
<comment type="similarity">
    <text evidence="4">Belongs to the WhiB family.</text>
</comment>
<organism>
    <name type="scientific">Mycobacterium tuberculosis (strain CDC 1551 / Oshkosh)</name>
    <dbReference type="NCBI Taxonomy" id="83331"/>
    <lineage>
        <taxon>Bacteria</taxon>
        <taxon>Bacillati</taxon>
        <taxon>Actinomycetota</taxon>
        <taxon>Actinomycetes</taxon>
        <taxon>Mycobacteriales</taxon>
        <taxon>Mycobacteriaceae</taxon>
        <taxon>Mycobacterium</taxon>
        <taxon>Mycobacterium tuberculosis complex</taxon>
    </lineage>
</organism>
<reference key="1">
    <citation type="journal article" date="2002" name="J. Bacteriol.">
        <title>Whole-genome comparison of Mycobacterium tuberculosis clinical and laboratory strains.</title>
        <authorList>
            <person name="Fleischmann R.D."/>
            <person name="Alland D."/>
            <person name="Eisen J.A."/>
            <person name="Carpenter L."/>
            <person name="White O."/>
            <person name="Peterson J.D."/>
            <person name="DeBoy R.T."/>
            <person name="Dodson R.J."/>
            <person name="Gwinn M.L."/>
            <person name="Haft D.H."/>
            <person name="Hickey E.K."/>
            <person name="Kolonay J.F."/>
            <person name="Nelson W.C."/>
            <person name="Umayam L.A."/>
            <person name="Ermolaeva M.D."/>
            <person name="Salzberg S.L."/>
            <person name="Delcher A."/>
            <person name="Utterback T.R."/>
            <person name="Weidman J.F."/>
            <person name="Khouri H.M."/>
            <person name="Gill J."/>
            <person name="Mikula A."/>
            <person name="Bishai W."/>
            <person name="Jacobs W.R. Jr."/>
            <person name="Venter J.C."/>
            <person name="Fraser C.M."/>
        </authorList>
    </citation>
    <scope>NUCLEOTIDE SEQUENCE [LARGE SCALE GENOMIC DNA]</scope>
    <source>
        <strain>CDC 1551 / Oshkosh</strain>
    </source>
</reference>
<reference key="2">
    <citation type="journal article" date="2006" name="Antimicrob. Agents Chemother.">
        <title>Differential gene expression in response to exposure to antimycobacterial agents and other stress conditions among seven Mycobacterium tuberculosis whiB-like genes.</title>
        <authorList>
            <person name="Geiman D.E."/>
            <person name="Raghunand T.R."/>
            <person name="Agarwal N."/>
            <person name="Bishai W.R."/>
        </authorList>
    </citation>
    <scope>INDUCTION</scope>
    <source>
        <strain>CDC 1551 / Oshkosh</strain>
    </source>
</reference>
<reference key="3">
    <citation type="journal article" date="2012" name="PLoS ONE">
        <title>Gene expression of Mycobacterium tuberculosis putative transcription factors whiB1-7 in redox environments.</title>
        <authorList>
            <person name="Larsson C."/>
            <person name="Luna B."/>
            <person name="Ammerman N.C."/>
            <person name="Maiga M."/>
            <person name="Agarwal N."/>
            <person name="Bishai W.R."/>
        </authorList>
    </citation>
    <scope>INDUCTION</scope>
    <source>
        <strain>CDC 1551 / Oshkosh</strain>
    </source>
</reference>
<gene>
    <name type="primary">whiB6</name>
    <name type="ordered locus">MT3976</name>
</gene>
<keyword id="KW-0004">4Fe-4S</keyword>
<keyword id="KW-0963">Cytoplasm</keyword>
<keyword id="KW-1015">Disulfide bond</keyword>
<keyword id="KW-0238">DNA-binding</keyword>
<keyword id="KW-0408">Iron</keyword>
<keyword id="KW-0411">Iron-sulfur</keyword>
<keyword id="KW-0479">Metal-binding</keyword>
<keyword id="KW-1185">Reference proteome</keyword>
<keyword id="KW-0804">Transcription</keyword>
<keyword id="KW-0805">Transcription regulation</keyword>
<protein>
    <recommendedName>
        <fullName>Probable transcriptional regulator WhiB6</fullName>
    </recommendedName>
</protein>
<proteinExistence type="evidence at transcript level"/>
<dbReference type="EMBL" id="AE000516">
    <property type="protein sequence ID" value="AAK48345.1"/>
    <property type="molecule type" value="Genomic_DNA"/>
</dbReference>
<dbReference type="PIR" id="C70656">
    <property type="entry name" value="C70656"/>
</dbReference>
<dbReference type="RefSeq" id="WP_003899734.1">
    <property type="nucleotide sequence ID" value="NZ_KK341227.1"/>
</dbReference>
<dbReference type="SMR" id="P9WF36"/>
<dbReference type="GeneID" id="45427866"/>
<dbReference type="KEGG" id="mtc:MT3976"/>
<dbReference type="HOGENOM" id="CLU_167541_0_0_11"/>
<dbReference type="Proteomes" id="UP000001020">
    <property type="component" value="Chromosome"/>
</dbReference>
<dbReference type="GO" id="GO:0005737">
    <property type="term" value="C:cytoplasm"/>
    <property type="evidence" value="ECO:0007669"/>
    <property type="project" value="UniProtKB-SubCell"/>
</dbReference>
<dbReference type="GO" id="GO:0051539">
    <property type="term" value="F:4 iron, 4 sulfur cluster binding"/>
    <property type="evidence" value="ECO:0007669"/>
    <property type="project" value="UniProtKB-UniRule"/>
</dbReference>
<dbReference type="GO" id="GO:0035731">
    <property type="term" value="F:dinitrosyl-iron complex binding"/>
    <property type="evidence" value="ECO:0007669"/>
    <property type="project" value="UniProtKB-UniRule"/>
</dbReference>
<dbReference type="GO" id="GO:0003677">
    <property type="term" value="F:DNA binding"/>
    <property type="evidence" value="ECO:0007669"/>
    <property type="project" value="UniProtKB-UniRule"/>
</dbReference>
<dbReference type="GO" id="GO:0046872">
    <property type="term" value="F:metal ion binding"/>
    <property type="evidence" value="ECO:0007669"/>
    <property type="project" value="UniProtKB-KW"/>
</dbReference>
<dbReference type="GO" id="GO:0006355">
    <property type="term" value="P:regulation of DNA-templated transcription"/>
    <property type="evidence" value="ECO:0007669"/>
    <property type="project" value="UniProtKB-UniRule"/>
</dbReference>
<dbReference type="HAMAP" id="MF_01479">
    <property type="entry name" value="WhiB"/>
    <property type="match status" value="1"/>
</dbReference>
<dbReference type="InterPro" id="IPR034768">
    <property type="entry name" value="4FE4S_WBL"/>
</dbReference>
<dbReference type="InterPro" id="IPR003482">
    <property type="entry name" value="Whib"/>
</dbReference>
<dbReference type="Pfam" id="PF02467">
    <property type="entry name" value="Whib"/>
    <property type="match status" value="1"/>
</dbReference>
<dbReference type="PROSITE" id="PS51674">
    <property type="entry name" value="4FE4S_WBL"/>
    <property type="match status" value="1"/>
</dbReference>
<feature type="chain" id="PRO_0000428607" description="Probable transcriptional regulator WhiB6">
    <location>
        <begin position="1"/>
        <end position="116"/>
    </location>
</feature>
<feature type="domain" description="4Fe-4S Wbl-type">
    <location>
        <begin position="33"/>
        <end position="86"/>
    </location>
</feature>
<feature type="binding site" evidence="1">
    <location>
        <position position="12"/>
    </location>
    <ligand>
        <name>[4Fe-4S] cluster</name>
        <dbReference type="ChEBI" id="CHEBI:49883"/>
    </ligand>
</feature>
<feature type="binding site" evidence="1">
    <location>
        <position position="53"/>
    </location>
    <ligand>
        <name>[4Fe-4S] cluster</name>
        <dbReference type="ChEBI" id="CHEBI:49883"/>
    </ligand>
</feature>
<feature type="binding site" evidence="1">
    <location>
        <position position="56"/>
    </location>
    <ligand>
        <name>[4Fe-4S] cluster</name>
        <dbReference type="ChEBI" id="CHEBI:49883"/>
    </ligand>
</feature>
<feature type="binding site" evidence="1">
    <location>
        <position position="62"/>
    </location>
    <ligand>
        <name>[4Fe-4S] cluster</name>
        <dbReference type="ChEBI" id="CHEBI:49883"/>
    </ligand>
</feature>
<accession>P9WF36</accession>
<accession>F2GDM3</accession>
<accession>L0TGU1</accession>
<accession>P96215</accession>
<accession>Q7D4Q1</accession>
<name>WHIB6_MYCTO</name>